<sequence>MDCGVFEGTVFSGLGHGSFYVSIYARNLRRALGYTPYPGTLNLRVGDAAERLAGCIERARGVRIEPPPIPGERLASVLAFPVEIEGGVRGHIVRPEITVYKGDVVEIVADVYLRDVLKISDGDKVRFRLLDP</sequence>
<comment type="function">
    <text evidence="1">Catalyzes the CTP-dependent phosphorylation of riboflavin (vitamin B2) to form flavin mononucleotide (FMN).</text>
</comment>
<comment type="catalytic activity">
    <reaction evidence="1">
        <text>riboflavin + CTP = CDP + FMN + H(+)</text>
        <dbReference type="Rhea" id="RHEA:25021"/>
        <dbReference type="ChEBI" id="CHEBI:15378"/>
        <dbReference type="ChEBI" id="CHEBI:37563"/>
        <dbReference type="ChEBI" id="CHEBI:57986"/>
        <dbReference type="ChEBI" id="CHEBI:58069"/>
        <dbReference type="ChEBI" id="CHEBI:58210"/>
        <dbReference type="EC" id="2.7.1.161"/>
    </reaction>
</comment>
<comment type="cofactor">
    <cofactor evidence="1">
        <name>Mg(2+)</name>
        <dbReference type="ChEBI" id="CHEBI:18420"/>
    </cofactor>
    <text evidence="1">Binds 1 Mg(2+) ion per subunit.</text>
</comment>
<comment type="pathway">
    <text evidence="1">Cofactor biosynthesis; FMN biosynthesis; FMN from riboflavin (CTP route): step 1/1.</text>
</comment>
<comment type="similarity">
    <text evidence="1">Belongs to the archaeal riboflavin kinase family.</text>
</comment>
<protein>
    <recommendedName>
        <fullName evidence="1">Riboflavin kinase</fullName>
        <shortName evidence="1">RFK</shortName>
        <ecNumber evidence="1">2.7.1.161</ecNumber>
    </recommendedName>
    <alternativeName>
        <fullName evidence="1">CTP-dependent riboflavin kinase</fullName>
    </alternativeName>
    <alternativeName>
        <fullName evidence="1">CTP:riboflavin 5'-phosphotransferase</fullName>
    </alternativeName>
    <alternativeName>
        <fullName evidence="1">Flavokinase</fullName>
    </alternativeName>
</protein>
<evidence type="ECO:0000255" key="1">
    <source>
        <dbReference type="HAMAP-Rule" id="MF_01285"/>
    </source>
</evidence>
<accession>Q9YA27</accession>
<proteinExistence type="inferred from homology"/>
<gene>
    <name evidence="1" type="primary">ribK</name>
    <name type="ordered locus">APE_2112.1</name>
</gene>
<dbReference type="EC" id="2.7.1.161" evidence="1"/>
<dbReference type="EMBL" id="BA000002">
    <property type="protein sequence ID" value="BAA81123.2"/>
    <property type="molecule type" value="Genomic_DNA"/>
</dbReference>
<dbReference type="PIR" id="C72517">
    <property type="entry name" value="C72517"/>
</dbReference>
<dbReference type="RefSeq" id="WP_010866802.1">
    <property type="nucleotide sequence ID" value="NC_000854.2"/>
</dbReference>
<dbReference type="SMR" id="Q9YA27"/>
<dbReference type="STRING" id="272557.APE_2112.1"/>
<dbReference type="DNASU" id="1445199"/>
<dbReference type="EnsemblBacteria" id="BAA81123">
    <property type="protein sequence ID" value="BAA81123"/>
    <property type="gene ID" value="APE_2112.1"/>
</dbReference>
<dbReference type="GeneID" id="1445199"/>
<dbReference type="KEGG" id="ape:APE_2112.1"/>
<dbReference type="eggNOG" id="arCOG01904">
    <property type="taxonomic scope" value="Archaea"/>
</dbReference>
<dbReference type="UniPathway" id="UPA00276">
    <property type="reaction ID" value="UER00929"/>
</dbReference>
<dbReference type="Proteomes" id="UP000002518">
    <property type="component" value="Chromosome"/>
</dbReference>
<dbReference type="GO" id="GO:0000287">
    <property type="term" value="F:magnesium ion binding"/>
    <property type="evidence" value="ECO:0007669"/>
    <property type="project" value="UniProtKB-UniRule"/>
</dbReference>
<dbReference type="GO" id="GO:0000166">
    <property type="term" value="F:nucleotide binding"/>
    <property type="evidence" value="ECO:0007669"/>
    <property type="project" value="UniProtKB-UniRule"/>
</dbReference>
<dbReference type="GO" id="GO:0008531">
    <property type="term" value="F:riboflavin kinase activity"/>
    <property type="evidence" value="ECO:0007669"/>
    <property type="project" value="InterPro"/>
</dbReference>
<dbReference type="GO" id="GO:0009398">
    <property type="term" value="P:FMN biosynthetic process"/>
    <property type="evidence" value="ECO:0007669"/>
    <property type="project" value="UniProtKB-UniRule"/>
</dbReference>
<dbReference type="GO" id="GO:0009231">
    <property type="term" value="P:riboflavin biosynthetic process"/>
    <property type="evidence" value="ECO:0007669"/>
    <property type="project" value="InterPro"/>
</dbReference>
<dbReference type="Gene3D" id="2.40.30.30">
    <property type="entry name" value="Riboflavin kinase-like"/>
    <property type="match status" value="1"/>
</dbReference>
<dbReference type="HAMAP" id="MF_01285">
    <property type="entry name" value="Riboflavin_kinase"/>
    <property type="match status" value="1"/>
</dbReference>
<dbReference type="InterPro" id="IPR039063">
    <property type="entry name" value="RibK_CTP-dep"/>
</dbReference>
<dbReference type="InterPro" id="IPR023470">
    <property type="entry name" value="Riboflavin_kinase_archaeal"/>
</dbReference>
<dbReference type="InterPro" id="IPR023602">
    <property type="entry name" value="Riboflavin_kinase_CTP-dep"/>
</dbReference>
<dbReference type="InterPro" id="IPR023465">
    <property type="entry name" value="Riboflavin_kinase_dom_sf"/>
</dbReference>
<dbReference type="PANTHER" id="PTHR40706">
    <property type="entry name" value="RIBOFLAVIN KINASE"/>
    <property type="match status" value="1"/>
</dbReference>
<dbReference type="PANTHER" id="PTHR40706:SF1">
    <property type="entry name" value="RIBOFLAVIN KINASE"/>
    <property type="match status" value="1"/>
</dbReference>
<dbReference type="Pfam" id="PF01982">
    <property type="entry name" value="CTP-dep_RFKase"/>
    <property type="match status" value="1"/>
</dbReference>
<dbReference type="SUPFAM" id="SSF82114">
    <property type="entry name" value="Riboflavin kinase-like"/>
    <property type="match status" value="1"/>
</dbReference>
<keyword id="KW-0285">Flavoprotein</keyword>
<keyword id="KW-0288">FMN</keyword>
<keyword id="KW-0418">Kinase</keyword>
<keyword id="KW-0460">Magnesium</keyword>
<keyword id="KW-0479">Metal-binding</keyword>
<keyword id="KW-0547">Nucleotide-binding</keyword>
<keyword id="KW-1185">Reference proteome</keyword>
<keyword id="KW-0808">Transferase</keyword>
<reference key="1">
    <citation type="journal article" date="1999" name="DNA Res.">
        <title>Complete genome sequence of an aerobic hyper-thermophilic crenarchaeon, Aeropyrum pernix K1.</title>
        <authorList>
            <person name="Kawarabayasi Y."/>
            <person name="Hino Y."/>
            <person name="Horikawa H."/>
            <person name="Yamazaki S."/>
            <person name="Haikawa Y."/>
            <person name="Jin-no K."/>
            <person name="Takahashi M."/>
            <person name="Sekine M."/>
            <person name="Baba S."/>
            <person name="Ankai A."/>
            <person name="Kosugi H."/>
            <person name="Hosoyama A."/>
            <person name="Fukui S."/>
            <person name="Nagai Y."/>
            <person name="Nishijima K."/>
            <person name="Nakazawa H."/>
            <person name="Takamiya M."/>
            <person name="Masuda S."/>
            <person name="Funahashi T."/>
            <person name="Tanaka T."/>
            <person name="Kudoh Y."/>
            <person name="Yamazaki J."/>
            <person name="Kushida N."/>
            <person name="Oguchi A."/>
            <person name="Aoki K."/>
            <person name="Kubota K."/>
            <person name="Nakamura Y."/>
            <person name="Nomura N."/>
            <person name="Sako Y."/>
            <person name="Kikuchi H."/>
        </authorList>
    </citation>
    <scope>NUCLEOTIDE SEQUENCE [LARGE SCALE GENOMIC DNA]</scope>
    <source>
        <strain>ATCC 700893 / DSM 11879 / JCM 9820 / NBRC 100138 / K1</strain>
    </source>
</reference>
<organism>
    <name type="scientific">Aeropyrum pernix (strain ATCC 700893 / DSM 11879 / JCM 9820 / NBRC 100138 / K1)</name>
    <dbReference type="NCBI Taxonomy" id="272557"/>
    <lineage>
        <taxon>Archaea</taxon>
        <taxon>Thermoproteota</taxon>
        <taxon>Thermoprotei</taxon>
        <taxon>Desulfurococcales</taxon>
        <taxon>Desulfurococcaceae</taxon>
        <taxon>Aeropyrum</taxon>
    </lineage>
</organism>
<name>RIFK_AERPE</name>
<feature type="chain" id="PRO_0000322065" description="Riboflavin kinase">
    <location>
        <begin position="1"/>
        <end position="132"/>
    </location>
</feature>
<feature type="binding site" evidence="1">
    <location>
        <begin position="13"/>
        <end position="18"/>
    </location>
    <ligand>
        <name>CDP</name>
        <dbReference type="ChEBI" id="CHEBI:58069"/>
    </ligand>
</feature>
<feature type="binding site" evidence="1">
    <location>
        <position position="40"/>
    </location>
    <ligand>
        <name>Mg(2+)</name>
        <dbReference type="ChEBI" id="CHEBI:18420"/>
    </ligand>
</feature>
<feature type="binding site" evidence="1">
    <location>
        <position position="42"/>
    </location>
    <ligand>
        <name>Mg(2+)</name>
        <dbReference type="ChEBI" id="CHEBI:18420"/>
    </ligand>
</feature>
<feature type="binding site" evidence="1">
    <location>
        <position position="98"/>
    </location>
    <ligand>
        <name>FMN</name>
        <dbReference type="ChEBI" id="CHEBI:58210"/>
    </ligand>
</feature>
<feature type="binding site" evidence="1">
    <location>
        <position position="106"/>
    </location>
    <ligand>
        <name>FMN</name>
        <dbReference type="ChEBI" id="CHEBI:58210"/>
    </ligand>
</feature>
<feature type="binding site" evidence="1">
    <location>
        <begin position="111"/>
        <end position="114"/>
    </location>
    <ligand>
        <name>CDP</name>
        <dbReference type="ChEBI" id="CHEBI:58069"/>
    </ligand>
</feature>